<organism>
    <name type="scientific">Chloroflexus aurantiacus (strain ATCC 29366 / DSM 635 / J-10-fl)</name>
    <dbReference type="NCBI Taxonomy" id="324602"/>
    <lineage>
        <taxon>Bacteria</taxon>
        <taxon>Bacillati</taxon>
        <taxon>Chloroflexota</taxon>
        <taxon>Chloroflexia</taxon>
        <taxon>Chloroflexales</taxon>
        <taxon>Chloroflexineae</taxon>
        <taxon>Chloroflexaceae</taxon>
        <taxon>Chloroflexus</taxon>
    </lineage>
</organism>
<dbReference type="EMBL" id="CP000909">
    <property type="protein sequence ID" value="ABY34052.1"/>
    <property type="molecule type" value="Genomic_DNA"/>
</dbReference>
<dbReference type="RefSeq" id="WP_012256708.1">
    <property type="nucleotide sequence ID" value="NC_010175.1"/>
</dbReference>
<dbReference type="RefSeq" id="YP_001634441.1">
    <property type="nucleotide sequence ID" value="NC_010175.1"/>
</dbReference>
<dbReference type="SMR" id="A9WGD1"/>
<dbReference type="FunCoup" id="A9WGD1">
    <property type="interactions" value="260"/>
</dbReference>
<dbReference type="STRING" id="324602.Caur_0816"/>
<dbReference type="TCDB" id="3.A.1.17.14">
    <property type="family name" value="the atp-binding cassette (abc) superfamily"/>
</dbReference>
<dbReference type="EnsemblBacteria" id="ABY34052">
    <property type="protein sequence ID" value="ABY34052"/>
    <property type="gene ID" value="Caur_0816"/>
</dbReference>
<dbReference type="KEGG" id="cau:Caur_0816"/>
<dbReference type="PATRIC" id="fig|324602.8.peg.930"/>
<dbReference type="eggNOG" id="COG0600">
    <property type="taxonomic scope" value="Bacteria"/>
</dbReference>
<dbReference type="HOGENOM" id="CLU_046113_2_1_0"/>
<dbReference type="InParanoid" id="A9WGD1"/>
<dbReference type="Proteomes" id="UP000002008">
    <property type="component" value="Chromosome"/>
</dbReference>
<dbReference type="GO" id="GO:0005886">
    <property type="term" value="C:plasma membrane"/>
    <property type="evidence" value="ECO:0000318"/>
    <property type="project" value="GO_Central"/>
</dbReference>
<dbReference type="GO" id="GO:0055085">
    <property type="term" value="P:transmembrane transport"/>
    <property type="evidence" value="ECO:0007669"/>
    <property type="project" value="InterPro"/>
</dbReference>
<dbReference type="CDD" id="cd06261">
    <property type="entry name" value="TM_PBP2"/>
    <property type="match status" value="1"/>
</dbReference>
<dbReference type="FunFam" id="1.10.3720.10:FF:000198">
    <property type="entry name" value="Riboflavin transport system permease protein RibX"/>
    <property type="match status" value="1"/>
</dbReference>
<dbReference type="Gene3D" id="1.10.3720.10">
    <property type="entry name" value="MetI-like"/>
    <property type="match status" value="1"/>
</dbReference>
<dbReference type="InterPro" id="IPR000515">
    <property type="entry name" value="MetI-like"/>
</dbReference>
<dbReference type="InterPro" id="IPR035906">
    <property type="entry name" value="MetI-like_sf"/>
</dbReference>
<dbReference type="PANTHER" id="PTHR30151:SF20">
    <property type="entry name" value="ABC TRANSPORTER PERMEASE PROTEIN HI_0355-RELATED"/>
    <property type="match status" value="1"/>
</dbReference>
<dbReference type="PANTHER" id="PTHR30151">
    <property type="entry name" value="ALKANE SULFONATE ABC TRANSPORTER-RELATED, MEMBRANE SUBUNIT"/>
    <property type="match status" value="1"/>
</dbReference>
<dbReference type="Pfam" id="PF00528">
    <property type="entry name" value="BPD_transp_1"/>
    <property type="match status" value="1"/>
</dbReference>
<dbReference type="SUPFAM" id="SSF161098">
    <property type="entry name" value="MetI-like"/>
    <property type="match status" value="1"/>
</dbReference>
<dbReference type="PROSITE" id="PS50928">
    <property type="entry name" value="ABC_TM1"/>
    <property type="match status" value="1"/>
</dbReference>
<accession>A9WGD1</accession>
<reference key="1">
    <citation type="journal article" date="2011" name="BMC Genomics">
        <title>Complete genome sequence of the filamentous anoxygenic phototrophic bacterium Chloroflexus aurantiacus.</title>
        <authorList>
            <person name="Tang K.H."/>
            <person name="Barry K."/>
            <person name="Chertkov O."/>
            <person name="Dalin E."/>
            <person name="Han C.S."/>
            <person name="Hauser L.J."/>
            <person name="Honchak B.M."/>
            <person name="Karbach L.E."/>
            <person name="Land M.L."/>
            <person name="Lapidus A."/>
            <person name="Larimer F.W."/>
            <person name="Mikhailova N."/>
            <person name="Pitluck S."/>
            <person name="Pierson B.K."/>
            <person name="Blankenship R.E."/>
        </authorList>
    </citation>
    <scope>NUCLEOTIDE SEQUENCE [LARGE SCALE GENOMIC DNA]</scope>
    <source>
        <strain>ATCC 29366 / DSM 635 / J-10-fl</strain>
    </source>
</reference>
<reference key="2">
    <citation type="journal article" date="2015" name="Environ. Microbiol. Rep.">
        <title>Genomic distribution of B-vitamin auxotrophy and uptake transporters in environmental bacteria from the Chloroflexi phylum.</title>
        <authorList>
            <person name="Rodionova I.A."/>
            <person name="Li X."/>
            <person name="Plymale A.E."/>
            <person name="Motamedchaboki K."/>
            <person name="Konopka A.E."/>
            <person name="Romine M.F."/>
            <person name="Fredrickson J.K."/>
            <person name="Osterman A.L."/>
            <person name="Rodionov D.A."/>
        </authorList>
    </citation>
    <scope>SUBUNIT</scope>
    <source>
        <strain>ATCC 29366 / DSM 635 / J-10-fl</strain>
    </source>
</reference>
<reference key="3">
    <citation type="journal article" date="2015" name="PLoS ONE">
        <title>Extensive identification of bacterial riboflavin transporters and their distribution across bacterial species.</title>
        <authorList>
            <person name="Gutierrez-Preciado A."/>
            <person name="Torres A.G."/>
            <person name="Merino E."/>
            <person name="Bonomi H.R."/>
            <person name="Goldbaum F.A."/>
            <person name="Garcia-Angulo V.A."/>
        </authorList>
    </citation>
    <scope>FUNCTION AS A TRANSPORTER</scope>
    <scope>INDUCTION</scope>
    <source>
        <strain>ATCC 29366 / DSM 635 / J-10-fl</strain>
    </source>
</reference>
<name>RIBX_CHLAA</name>
<evidence type="ECO:0000255" key="1"/>
<evidence type="ECO:0000255" key="2">
    <source>
        <dbReference type="PROSITE-ProRule" id="PRU00441"/>
    </source>
</evidence>
<evidence type="ECO:0000269" key="3">
    <source>
    </source>
</evidence>
<evidence type="ECO:0000303" key="4">
    <source>
    </source>
</evidence>
<evidence type="ECO:0000303" key="5">
    <source>
    </source>
</evidence>
<evidence type="ECO:0000305" key="6"/>
<evidence type="ECO:0000305" key="7">
    <source>
    </source>
</evidence>
<evidence type="ECO:0000312" key="8">
    <source>
        <dbReference type="EMBL" id="ABY34052.1"/>
    </source>
</evidence>
<keyword id="KW-1003">Cell membrane</keyword>
<keyword id="KW-0472">Membrane</keyword>
<keyword id="KW-1185">Reference proteome</keyword>
<keyword id="KW-0812">Transmembrane</keyword>
<keyword id="KW-1133">Transmembrane helix</keyword>
<keyword id="KW-0813">Transport</keyword>
<protein>
    <recommendedName>
        <fullName evidence="6">Riboflavin transport system permease protein RibX</fullName>
    </recommendedName>
</protein>
<feature type="chain" id="PRO_0000438277" description="Riboflavin transport system permease protein RibX">
    <location>
        <begin position="1"/>
        <end position="268"/>
    </location>
</feature>
<feature type="transmembrane region" description="Helical" evidence="1">
    <location>
        <begin position="24"/>
        <end position="44"/>
    </location>
</feature>
<feature type="transmembrane region" description="Helical" evidence="1">
    <location>
        <begin position="76"/>
        <end position="96"/>
    </location>
</feature>
<feature type="transmembrane region" description="Helical" evidence="1">
    <location>
        <begin position="119"/>
        <end position="139"/>
    </location>
</feature>
<feature type="transmembrane region" description="Helical" evidence="1">
    <location>
        <begin position="140"/>
        <end position="160"/>
    </location>
</feature>
<feature type="transmembrane region" description="Helical" evidence="1">
    <location>
        <begin position="185"/>
        <end position="205"/>
    </location>
</feature>
<feature type="transmembrane region" description="Helical" evidence="1">
    <location>
        <begin position="236"/>
        <end position="256"/>
    </location>
</feature>
<feature type="domain" description="ABC transmembrane type-1" evidence="2">
    <location>
        <begin position="75"/>
        <end position="255"/>
    </location>
</feature>
<proteinExistence type="evidence at protein level"/>
<comment type="function">
    <text evidence="3">Part of an ABC transporter complex that transports riboflavin into the cell.</text>
</comment>
<comment type="subunit">
    <text evidence="7">The complex is likely composed of an ATP-binding protein, a transmembrane protein (RibX) and a solute-binding protein (RibY).</text>
</comment>
<comment type="subcellular location">
    <subcellularLocation>
        <location evidence="6">Cell membrane</location>
        <topology evidence="1">Multi-pass membrane protein</topology>
    </subcellularLocation>
</comment>
<comment type="induction">
    <text evidence="3">Expression is probably regulated by riboflavin, via an FMN riboswitch.</text>
</comment>
<comment type="similarity">
    <text evidence="6">Belongs to the binding-protein-dependent transport system permease family.</text>
</comment>
<gene>
    <name evidence="4 5" type="primary">ribX</name>
    <name evidence="8" type="ordered locus">Caur_0816</name>
</gene>
<sequence length="268" mass="28685">MQQTLPVTRVSPRVRSLQRFEWPALGLPVTLMLLLVFWQAGVTLSGYPAFILPSPALVAGRFWQALSSGLLWQHTLATLSAALGGFTLALIIALILGYTLAHIRWLEQALAPVLAASQAIPVVAVAPLIILWFGAGLTSKVLVAALITFLPILINTVVAIRSIPRELIEMAYISGANRWQLLRYVEAPLALPVLFGGVRTGLALATTGAVVGEFVAGRVGLGALINIARGLFDTPLIFVALATLALITLTLYVLAGLLERLLVRWEAS</sequence>